<accession>P36781</accession>
<protein>
    <recommendedName>
        <fullName evidence="1">Regulatory protein E2</fullName>
    </recommendedName>
</protein>
<gene>
    <name evidence="1" type="primary">E2</name>
</gene>
<reference key="1">
    <citation type="journal article" date="1994" name="Curr. Top. Microbiol. Immunol.">
        <title>Primer-directed sequencing of human papillomavirus types.</title>
        <authorList>
            <person name="Delius H."/>
            <person name="Hofmann B."/>
        </authorList>
    </citation>
    <scope>NUCLEOTIDE SEQUENCE [GENOMIC DNA]</scope>
</reference>
<organism>
    <name type="scientific">Human papillomavirus type 10</name>
    <dbReference type="NCBI Taxonomy" id="333759"/>
    <lineage>
        <taxon>Viruses</taxon>
        <taxon>Monodnaviria</taxon>
        <taxon>Shotokuvirae</taxon>
        <taxon>Cossaviricota</taxon>
        <taxon>Papovaviricetes</taxon>
        <taxon>Zurhausenvirales</taxon>
        <taxon>Papillomaviridae</taxon>
        <taxon>Firstpapillomavirinae</taxon>
        <taxon>Alphapapillomavirus</taxon>
        <taxon>Alphapapillomavirus 2</taxon>
    </lineage>
</organism>
<comment type="function">
    <text evidence="1">Plays a role in the initiation of viral DNA replication. A dimer of E2 interacts with a dimer of E1 in order to improve specificity of E1 DNA binding activity. Once the complex recognizes and binds DNA at specific sites, the E2 dimer is removed from DNA. E2 also regulates viral transcription through binding to the E2RE response element (5'-ACCNNNNNNGGT-3') present in multiple copies in the regulatory regions of the viral genome. Activates or represses transcription depending on E2RE's position with regards to proximal promoter elements including the TATA-box. Repression occurs by sterically hindering the assembly of the transcription initiation complex.</text>
</comment>
<comment type="subunit">
    <text evidence="1">Binds DNA as homodimer. Interacts with protein E1; this interaction greatly increases E1 DNA-binding activity. Interacts with protein L1; this interaction enhances E2-dependent replication and transcription activation. Interacts with protein L2; this interaction inhibits E2 transcriptional activity but not DNA replication function E2. Interacts with protein E7; this interaction inhibits E7 oncogenic activity. Interacts with host TAF1; this interaction modulates E2-dependent transcriptional regulation. Interacts with host BRD4; this interaction mediates E2 transcriptional activation function. Additionally, the interaction with host BRD4 on mitotic chromosomes mediates tethering of the viral genome. Interacts with host TOPBP1; this interaction is required for optimal viral DNA replication.</text>
</comment>
<comment type="subcellular location">
    <subcellularLocation>
        <location evidence="1">Host nucleus</location>
    </subcellularLocation>
</comment>
<comment type="PTM">
    <text evidence="1">Phosphorylated.</text>
</comment>
<comment type="similarity">
    <text evidence="1">Belongs to the papillomaviridae E2 protein family.</text>
</comment>
<proteinExistence type="inferred from homology"/>
<keyword id="KW-0010">Activator</keyword>
<keyword id="KW-0235">DNA replication</keyword>
<keyword id="KW-0238">DNA-binding</keyword>
<keyword id="KW-0244">Early protein</keyword>
<keyword id="KW-1048">Host nucleus</keyword>
<keyword id="KW-0597">Phosphoprotein</keyword>
<keyword id="KW-1185">Reference proteome</keyword>
<keyword id="KW-0678">Repressor</keyword>
<keyword id="KW-0804">Transcription</keyword>
<keyword id="KW-0805">Transcription regulation</keyword>
<name>VE2_HPV10</name>
<sequence length="376" mass="43003">METLANRLDACQDKMLELYEKDSDKLEDQITHWHLLRVENALLYKARECGLTHIGHQVVPPLSVTKAKARNAIEVHVALQQLQESAYAHEPWTLRDTSREMWDTAPKGCWKKRGITVEVRYDGDESKAMCYVQWRELYVQNYSDDRWVKVPGKVSYEGLYYTHENMNIYYVNFKDDACVYGETGKWEVHVGGKVIHHDAFDPVSSTREISTPGPVCTSNTTPASTQAQVGASEGPEQKRQRLEAVDGQHQQQRQGSKDSTQKAAERAGGQVDSDRTRLCDTRSAHPVRHPSDPDCAPVIHLRGDPNSLKCFRYRLHHGKRKLYSRSSSTWRWSCESENQAAFVTLWYTSDTQRTEFLNVVKVPPGIQVILGYMSIF</sequence>
<organismHost>
    <name type="scientific">Homo sapiens</name>
    <name type="common">Human</name>
    <dbReference type="NCBI Taxonomy" id="9606"/>
</organismHost>
<evidence type="ECO:0000255" key="1">
    <source>
        <dbReference type="HAMAP-Rule" id="MF_04001"/>
    </source>
</evidence>
<evidence type="ECO:0000256" key="2">
    <source>
        <dbReference type="SAM" id="MobiDB-lite"/>
    </source>
</evidence>
<feature type="chain" id="PRO_0000133189" description="Regulatory protein E2">
    <location>
        <begin position="1"/>
        <end position="376"/>
    </location>
</feature>
<feature type="region of interest" description="Transactivation domain" evidence="1">
    <location>
        <begin position="1"/>
        <end position="206"/>
    </location>
</feature>
<feature type="region of interest" description="Disordered" evidence="2">
    <location>
        <begin position="204"/>
        <end position="277"/>
    </location>
</feature>
<feature type="region of interest" description="DNA-binding domain" evidence="1">
    <location>
        <begin position="295"/>
        <end position="376"/>
    </location>
</feature>
<feature type="compositionally biased region" description="Polar residues" evidence="2">
    <location>
        <begin position="216"/>
        <end position="229"/>
    </location>
</feature>
<feature type="compositionally biased region" description="Basic and acidic residues" evidence="2">
    <location>
        <begin position="235"/>
        <end position="246"/>
    </location>
</feature>
<feature type="compositionally biased region" description="Basic and acidic residues" evidence="2">
    <location>
        <begin position="255"/>
        <end position="265"/>
    </location>
</feature>
<dbReference type="EMBL" id="X74465">
    <property type="protein sequence ID" value="CAA52492.1"/>
    <property type="molecule type" value="Genomic_DNA"/>
</dbReference>
<dbReference type="PIR" id="S36535">
    <property type="entry name" value="S36535"/>
</dbReference>
<dbReference type="RefSeq" id="NP_041744.1">
    <property type="nucleotide sequence ID" value="NC_001576.1"/>
</dbReference>
<dbReference type="SMR" id="P36781"/>
<dbReference type="GeneID" id="1489374"/>
<dbReference type="KEGG" id="vg:1489374"/>
<dbReference type="OrthoDB" id="15886at10239"/>
<dbReference type="Proteomes" id="UP000009105">
    <property type="component" value="Genome"/>
</dbReference>
<dbReference type="GO" id="GO:0042025">
    <property type="term" value="C:host cell nucleus"/>
    <property type="evidence" value="ECO:0007669"/>
    <property type="project" value="UniProtKB-SubCell"/>
</dbReference>
<dbReference type="GO" id="GO:0003677">
    <property type="term" value="F:DNA binding"/>
    <property type="evidence" value="ECO:0007669"/>
    <property type="project" value="UniProtKB-UniRule"/>
</dbReference>
<dbReference type="GO" id="GO:0003700">
    <property type="term" value="F:DNA-binding transcription factor activity"/>
    <property type="evidence" value="ECO:0007669"/>
    <property type="project" value="UniProtKB-UniRule"/>
</dbReference>
<dbReference type="GO" id="GO:0000166">
    <property type="term" value="F:nucleotide binding"/>
    <property type="evidence" value="ECO:0007669"/>
    <property type="project" value="UniProtKB-UniRule"/>
</dbReference>
<dbReference type="GO" id="GO:0006260">
    <property type="term" value="P:DNA replication"/>
    <property type="evidence" value="ECO:0007669"/>
    <property type="project" value="UniProtKB-KW"/>
</dbReference>
<dbReference type="GO" id="GO:0006351">
    <property type="term" value="P:DNA-templated transcription"/>
    <property type="evidence" value="ECO:0007669"/>
    <property type="project" value="UniProtKB-UniRule"/>
</dbReference>
<dbReference type="GO" id="GO:0006275">
    <property type="term" value="P:regulation of DNA replication"/>
    <property type="evidence" value="ECO:0007669"/>
    <property type="project" value="UniProtKB-UniRule"/>
</dbReference>
<dbReference type="GO" id="GO:0039693">
    <property type="term" value="P:viral DNA genome replication"/>
    <property type="evidence" value="ECO:0007669"/>
    <property type="project" value="UniProtKB-UniRule"/>
</dbReference>
<dbReference type="Gene3D" id="3.30.70.330">
    <property type="match status" value="1"/>
</dbReference>
<dbReference type="Gene3D" id="1.10.287.30">
    <property type="entry name" value="E2 (early) protein, N terminal domain, subdomain 1"/>
    <property type="match status" value="1"/>
</dbReference>
<dbReference type="Gene3D" id="2.170.200.10">
    <property type="entry name" value="Papillomavirus E2 early protein domain"/>
    <property type="match status" value="1"/>
</dbReference>
<dbReference type="HAMAP" id="MF_04001">
    <property type="entry name" value="PPV_E2"/>
    <property type="match status" value="1"/>
</dbReference>
<dbReference type="InterPro" id="IPR035975">
    <property type="entry name" value="E2/EBNA1_C_sf"/>
</dbReference>
<dbReference type="InterPro" id="IPR012677">
    <property type="entry name" value="Nucleotide-bd_a/b_plait_sf"/>
</dbReference>
<dbReference type="InterPro" id="IPR000427">
    <property type="entry name" value="Papillomavirus_E2_C"/>
</dbReference>
<dbReference type="InterPro" id="IPR001866">
    <property type="entry name" value="PPV_E2_N"/>
</dbReference>
<dbReference type="InterPro" id="IPR033668">
    <property type="entry name" value="Reg_prot_E2"/>
</dbReference>
<dbReference type="InterPro" id="IPR036050">
    <property type="entry name" value="Regulatory_protein_E2_N"/>
</dbReference>
<dbReference type="InterPro" id="IPR042503">
    <property type="entry name" value="Regulatory_protein_E2_N_1"/>
</dbReference>
<dbReference type="InterPro" id="IPR042504">
    <property type="entry name" value="Regulatory_protein_E2_N_2"/>
</dbReference>
<dbReference type="Pfam" id="PF00511">
    <property type="entry name" value="PPV_E2_C"/>
    <property type="match status" value="1"/>
</dbReference>
<dbReference type="Pfam" id="PF00508">
    <property type="entry name" value="PPV_E2_N"/>
    <property type="match status" value="1"/>
</dbReference>
<dbReference type="SUPFAM" id="SSF51332">
    <property type="entry name" value="E2 regulatory, transactivation domain"/>
    <property type="match status" value="1"/>
</dbReference>
<dbReference type="SUPFAM" id="SSF54957">
    <property type="entry name" value="Viral DNA-binding domain"/>
    <property type="match status" value="1"/>
</dbReference>